<evidence type="ECO:0000255" key="1">
    <source>
        <dbReference type="HAMAP-Rule" id="MF_00367"/>
    </source>
</evidence>
<evidence type="ECO:0000255" key="2">
    <source>
        <dbReference type="PROSITE-ProRule" id="PRU01050"/>
    </source>
</evidence>
<keyword id="KW-0997">Cell inner membrane</keyword>
<keyword id="KW-1003">Cell membrane</keyword>
<keyword id="KW-0963">Cytoplasm</keyword>
<keyword id="KW-0342">GTP-binding</keyword>
<keyword id="KW-0472">Membrane</keyword>
<keyword id="KW-0547">Nucleotide-binding</keyword>
<keyword id="KW-0690">Ribosome biogenesis</keyword>
<keyword id="KW-0694">RNA-binding</keyword>
<keyword id="KW-0699">rRNA-binding</keyword>
<sequence>MKPTYCGYAAIIGRPNVGKSTLLNQLLGQKISITSRKPQTTRYQILGVKTFKDIQVIYVDTPGLHAGTERTINRYMNRTARGALRDVDAIVFVIEPHWESQDAWVLDNLKEIETPVFLVINKVDKIKNRAELLPLIEKVSSLYAFQKIIPLSAKTGDQVGTLEQAVHQLMPESPFYFPPEQVTDRSDQFMASEIIREKLMRLLGQEIPYSLAVTLIEFRKEEKIIRISAVIWVEKKSQKGIVIGKGGERLKRVGTNARLDMEKWFGKKVFLQLWVKVKSGWADNERLLRELGFEE</sequence>
<reference key="1">
    <citation type="journal article" date="2009" name="Infect. Immun.">
        <title>Comparative genomics reveal extensive transposon-mediated genomic plasticity and diversity among potential effector proteins within the genus Coxiella.</title>
        <authorList>
            <person name="Beare P.A."/>
            <person name="Unsworth N."/>
            <person name="Andoh M."/>
            <person name="Voth D.E."/>
            <person name="Omsland A."/>
            <person name="Gilk S.D."/>
            <person name="Williams K.P."/>
            <person name="Sobral B.W."/>
            <person name="Kupko J.J. III"/>
            <person name="Porcella S.F."/>
            <person name="Samuel J.E."/>
            <person name="Heinzen R.A."/>
        </authorList>
    </citation>
    <scope>NUCLEOTIDE SEQUENCE [LARGE SCALE GENOMIC DNA]</scope>
    <source>
        <strain>Dugway 5J108-111</strain>
    </source>
</reference>
<proteinExistence type="inferred from homology"/>
<comment type="function">
    <text evidence="1">An essential GTPase that binds both GDP and GTP, with rapid nucleotide exchange. Plays a role in 16S rRNA processing and 30S ribosomal subunit biogenesis and possibly also in cell cycle regulation and energy metabolism.</text>
</comment>
<comment type="subunit">
    <text evidence="1">Monomer.</text>
</comment>
<comment type="subcellular location">
    <subcellularLocation>
        <location>Cytoplasm</location>
    </subcellularLocation>
    <subcellularLocation>
        <location evidence="1">Cell inner membrane</location>
        <topology evidence="1">Peripheral membrane protein</topology>
    </subcellularLocation>
</comment>
<comment type="similarity">
    <text evidence="1 2">Belongs to the TRAFAC class TrmE-Era-EngA-EngB-Septin-like GTPase superfamily. Era GTPase family.</text>
</comment>
<organism>
    <name type="scientific">Coxiella burnetii (strain Dugway 5J108-111)</name>
    <dbReference type="NCBI Taxonomy" id="434922"/>
    <lineage>
        <taxon>Bacteria</taxon>
        <taxon>Pseudomonadati</taxon>
        <taxon>Pseudomonadota</taxon>
        <taxon>Gammaproteobacteria</taxon>
        <taxon>Legionellales</taxon>
        <taxon>Coxiellaceae</taxon>
        <taxon>Coxiella</taxon>
    </lineage>
</organism>
<gene>
    <name evidence="1" type="primary">era</name>
    <name type="ordered locus">CBUD_0482</name>
</gene>
<feature type="chain" id="PRO_1000079680" description="GTPase Era">
    <location>
        <begin position="1"/>
        <end position="295"/>
    </location>
</feature>
<feature type="domain" description="Era-type G" evidence="2">
    <location>
        <begin position="5"/>
        <end position="172"/>
    </location>
</feature>
<feature type="domain" description="KH type-2" evidence="1">
    <location>
        <begin position="203"/>
        <end position="279"/>
    </location>
</feature>
<feature type="region of interest" description="G1" evidence="2">
    <location>
        <begin position="13"/>
        <end position="20"/>
    </location>
</feature>
<feature type="region of interest" description="G2" evidence="2">
    <location>
        <begin position="39"/>
        <end position="43"/>
    </location>
</feature>
<feature type="region of interest" description="G3" evidence="2">
    <location>
        <begin position="60"/>
        <end position="63"/>
    </location>
</feature>
<feature type="region of interest" description="G4" evidence="2">
    <location>
        <begin position="121"/>
        <end position="124"/>
    </location>
</feature>
<feature type="region of interest" description="G5" evidence="2">
    <location>
        <begin position="151"/>
        <end position="153"/>
    </location>
</feature>
<feature type="binding site" evidence="1">
    <location>
        <begin position="13"/>
        <end position="20"/>
    </location>
    <ligand>
        <name>GTP</name>
        <dbReference type="ChEBI" id="CHEBI:37565"/>
    </ligand>
</feature>
<feature type="binding site" evidence="1">
    <location>
        <begin position="60"/>
        <end position="64"/>
    </location>
    <ligand>
        <name>GTP</name>
        <dbReference type="ChEBI" id="CHEBI:37565"/>
    </ligand>
</feature>
<feature type="binding site" evidence="1">
    <location>
        <begin position="121"/>
        <end position="124"/>
    </location>
    <ligand>
        <name>GTP</name>
        <dbReference type="ChEBI" id="CHEBI:37565"/>
    </ligand>
</feature>
<name>ERA_COXBN</name>
<accession>A9KFA1</accession>
<protein>
    <recommendedName>
        <fullName evidence="1">GTPase Era</fullName>
    </recommendedName>
</protein>
<dbReference type="EMBL" id="CP000733">
    <property type="protein sequence ID" value="ABS78199.1"/>
    <property type="molecule type" value="Genomic_DNA"/>
</dbReference>
<dbReference type="RefSeq" id="WP_005772033.1">
    <property type="nucleotide sequence ID" value="NC_009727.1"/>
</dbReference>
<dbReference type="SMR" id="A9KFA1"/>
<dbReference type="KEGG" id="cbd:CBUD_0482"/>
<dbReference type="HOGENOM" id="CLU_038009_1_2_6"/>
<dbReference type="Proteomes" id="UP000008555">
    <property type="component" value="Chromosome"/>
</dbReference>
<dbReference type="GO" id="GO:0005829">
    <property type="term" value="C:cytosol"/>
    <property type="evidence" value="ECO:0007669"/>
    <property type="project" value="TreeGrafter"/>
</dbReference>
<dbReference type="GO" id="GO:0005886">
    <property type="term" value="C:plasma membrane"/>
    <property type="evidence" value="ECO:0007669"/>
    <property type="project" value="UniProtKB-SubCell"/>
</dbReference>
<dbReference type="GO" id="GO:0005525">
    <property type="term" value="F:GTP binding"/>
    <property type="evidence" value="ECO:0007669"/>
    <property type="project" value="UniProtKB-UniRule"/>
</dbReference>
<dbReference type="GO" id="GO:0003924">
    <property type="term" value="F:GTPase activity"/>
    <property type="evidence" value="ECO:0007669"/>
    <property type="project" value="UniProtKB-UniRule"/>
</dbReference>
<dbReference type="GO" id="GO:0043024">
    <property type="term" value="F:ribosomal small subunit binding"/>
    <property type="evidence" value="ECO:0007669"/>
    <property type="project" value="TreeGrafter"/>
</dbReference>
<dbReference type="GO" id="GO:0070181">
    <property type="term" value="F:small ribosomal subunit rRNA binding"/>
    <property type="evidence" value="ECO:0007669"/>
    <property type="project" value="UniProtKB-UniRule"/>
</dbReference>
<dbReference type="GO" id="GO:0000028">
    <property type="term" value="P:ribosomal small subunit assembly"/>
    <property type="evidence" value="ECO:0007669"/>
    <property type="project" value="TreeGrafter"/>
</dbReference>
<dbReference type="CDD" id="cd04163">
    <property type="entry name" value="Era"/>
    <property type="match status" value="1"/>
</dbReference>
<dbReference type="CDD" id="cd22534">
    <property type="entry name" value="KH-II_Era"/>
    <property type="match status" value="1"/>
</dbReference>
<dbReference type="FunFam" id="3.30.300.20:FF:000003">
    <property type="entry name" value="GTPase Era"/>
    <property type="match status" value="1"/>
</dbReference>
<dbReference type="FunFam" id="3.40.50.300:FF:000094">
    <property type="entry name" value="GTPase Era"/>
    <property type="match status" value="1"/>
</dbReference>
<dbReference type="Gene3D" id="3.30.300.20">
    <property type="match status" value="1"/>
</dbReference>
<dbReference type="Gene3D" id="3.40.50.300">
    <property type="entry name" value="P-loop containing nucleotide triphosphate hydrolases"/>
    <property type="match status" value="1"/>
</dbReference>
<dbReference type="HAMAP" id="MF_00367">
    <property type="entry name" value="GTPase_Era"/>
    <property type="match status" value="1"/>
</dbReference>
<dbReference type="InterPro" id="IPR030388">
    <property type="entry name" value="G_ERA_dom"/>
</dbReference>
<dbReference type="InterPro" id="IPR006073">
    <property type="entry name" value="GTP-bd"/>
</dbReference>
<dbReference type="InterPro" id="IPR005662">
    <property type="entry name" value="GTPase_Era-like"/>
</dbReference>
<dbReference type="InterPro" id="IPR015946">
    <property type="entry name" value="KH_dom-like_a/b"/>
</dbReference>
<dbReference type="InterPro" id="IPR004044">
    <property type="entry name" value="KH_dom_type_2"/>
</dbReference>
<dbReference type="InterPro" id="IPR009019">
    <property type="entry name" value="KH_sf_prok-type"/>
</dbReference>
<dbReference type="InterPro" id="IPR027417">
    <property type="entry name" value="P-loop_NTPase"/>
</dbReference>
<dbReference type="InterPro" id="IPR005225">
    <property type="entry name" value="Small_GTP-bd"/>
</dbReference>
<dbReference type="NCBIfam" id="TIGR00436">
    <property type="entry name" value="era"/>
    <property type="match status" value="1"/>
</dbReference>
<dbReference type="NCBIfam" id="NF000908">
    <property type="entry name" value="PRK00089.1"/>
    <property type="match status" value="1"/>
</dbReference>
<dbReference type="NCBIfam" id="TIGR00231">
    <property type="entry name" value="small_GTP"/>
    <property type="match status" value="1"/>
</dbReference>
<dbReference type="PANTHER" id="PTHR42698">
    <property type="entry name" value="GTPASE ERA"/>
    <property type="match status" value="1"/>
</dbReference>
<dbReference type="PANTHER" id="PTHR42698:SF1">
    <property type="entry name" value="GTPASE ERA, MITOCHONDRIAL"/>
    <property type="match status" value="1"/>
</dbReference>
<dbReference type="Pfam" id="PF07650">
    <property type="entry name" value="KH_2"/>
    <property type="match status" value="1"/>
</dbReference>
<dbReference type="Pfam" id="PF01926">
    <property type="entry name" value="MMR_HSR1"/>
    <property type="match status" value="1"/>
</dbReference>
<dbReference type="PRINTS" id="PR00326">
    <property type="entry name" value="GTP1OBG"/>
</dbReference>
<dbReference type="SUPFAM" id="SSF52540">
    <property type="entry name" value="P-loop containing nucleoside triphosphate hydrolases"/>
    <property type="match status" value="1"/>
</dbReference>
<dbReference type="SUPFAM" id="SSF54814">
    <property type="entry name" value="Prokaryotic type KH domain (KH-domain type II)"/>
    <property type="match status" value="1"/>
</dbReference>
<dbReference type="PROSITE" id="PS51713">
    <property type="entry name" value="G_ERA"/>
    <property type="match status" value="1"/>
</dbReference>
<dbReference type="PROSITE" id="PS50823">
    <property type="entry name" value="KH_TYPE_2"/>
    <property type="match status" value="1"/>
</dbReference>